<protein>
    <recommendedName>
        <fullName evidence="1">1,4-alpha-glucan branching enzyme GlgB</fullName>
        <ecNumber evidence="1">2.4.1.18</ecNumber>
    </recommendedName>
    <alternativeName>
        <fullName evidence="1">1,4-alpha-D-glucan:1,4-alpha-D-glucan 6-glucosyl-transferase</fullName>
    </alternativeName>
    <alternativeName>
        <fullName evidence="1">Alpha-(1-&gt;4)-glucan branching enzyme</fullName>
    </alternativeName>
    <alternativeName>
        <fullName evidence="1">Glycogen branching enzyme</fullName>
        <shortName evidence="1">BE</shortName>
    </alternativeName>
</protein>
<keyword id="KW-0119">Carbohydrate metabolism</keyword>
<keyword id="KW-0320">Glycogen biosynthesis</keyword>
<keyword id="KW-0321">Glycogen metabolism</keyword>
<keyword id="KW-0328">Glycosyltransferase</keyword>
<keyword id="KW-0808">Transferase</keyword>
<accession>Q15VD0</accession>
<feature type="chain" id="PRO_0000260676" description="1,4-alpha-glucan branching enzyme GlgB">
    <location>
        <begin position="1"/>
        <end position="729"/>
    </location>
</feature>
<feature type="active site" description="Nucleophile" evidence="1">
    <location>
        <position position="407"/>
    </location>
</feature>
<feature type="active site" description="Proton donor" evidence="1">
    <location>
        <position position="460"/>
    </location>
</feature>
<gene>
    <name evidence="1" type="primary">glgB</name>
    <name type="ordered locus">Patl_1636</name>
</gene>
<sequence>MQLEKQLQHAQCTFPFSHLGLLKTDNAFTITAWVPNATGIKVIDLATDKAIGSLKRQAQSDLFTAEFTKGNPPAVYAFEVKNAQGSYRIIDPYQFQDQAFHAVHFVDHLPKNVYQQLGAQLIDLDVGLKTPIAATRFAVFAPNASAVSVIGDFNYWDGSCLPMQKTDFGYWVLVVPGVKAGDKYKYQIKDAHGNELPHKADPVGFYAEQYPSHASVVFDHEQYQWQDTKWQQQVKGDKYTQAMSIYEVHLGSWKRPDSQSGKTYLSYHELVDELIPYVKDMGYTHLELLPISEFPFDGSWGYQPVGLFAPTSRFGGPDDFKYFVDQCHQNGIGVIIDWVPAHFPEDGHGLARFDGTHVYEYEDPRKGWHPDWNSCIYDFGKDTVRQFLVANALFWLDKYHVDGLRVDAVASMLYLDYSREADEWVPNVDGGNHNYEAISLLQWMNKEVYSHYPNAMTIAEESTSFAKVSRPVFEGGLGFGFKWNMGWMHDSLHYISKDPSYRRYHHGEMTFSMVYAYDESFVLPISHDEVVHGKGSLLRKMPGDEWQQAANLRCYAAFMYAHPGKKLNFMGNEIGQSAEWNHDSSINWHLLDYDKHSGIQALYRDLNTLYAEYPALHELDHDPAGFEWIDHENAEQSTLAMLRQSKGGKQQVYALSNFTPVPRTNFRLGVKAPGEYSILLNTDDKQYWGSGHSQNKTIKADKTPWNNQAYSISVSLPPLATVFILYKGQ</sequence>
<proteinExistence type="inferred from homology"/>
<comment type="function">
    <text evidence="1">Catalyzes the formation of the alpha-1,6-glucosidic linkages in glycogen by scission of a 1,4-alpha-linked oligosaccharide from growing alpha-1,4-glucan chains and the subsequent attachment of the oligosaccharide to the alpha-1,6 position.</text>
</comment>
<comment type="catalytic activity">
    <reaction evidence="1">
        <text>Transfers a segment of a (1-&gt;4)-alpha-D-glucan chain to a primary hydroxy group in a similar glucan chain.</text>
        <dbReference type="EC" id="2.4.1.18"/>
    </reaction>
</comment>
<comment type="pathway">
    <text evidence="1">Glycan biosynthesis; glycogen biosynthesis.</text>
</comment>
<comment type="subunit">
    <text evidence="1">Monomer.</text>
</comment>
<comment type="similarity">
    <text evidence="1">Belongs to the glycosyl hydrolase 13 family. GlgB subfamily.</text>
</comment>
<reference key="1">
    <citation type="submission" date="2006-06" db="EMBL/GenBank/DDBJ databases">
        <title>Complete sequence of Pseudoalteromonas atlantica T6c.</title>
        <authorList>
            <consortium name="US DOE Joint Genome Institute"/>
            <person name="Copeland A."/>
            <person name="Lucas S."/>
            <person name="Lapidus A."/>
            <person name="Barry K."/>
            <person name="Detter J.C."/>
            <person name="Glavina del Rio T."/>
            <person name="Hammon N."/>
            <person name="Israni S."/>
            <person name="Dalin E."/>
            <person name="Tice H."/>
            <person name="Pitluck S."/>
            <person name="Saunders E."/>
            <person name="Brettin T."/>
            <person name="Bruce D."/>
            <person name="Han C."/>
            <person name="Tapia R."/>
            <person name="Gilna P."/>
            <person name="Schmutz J."/>
            <person name="Larimer F."/>
            <person name="Land M."/>
            <person name="Hauser L."/>
            <person name="Kyrpides N."/>
            <person name="Kim E."/>
            <person name="Karls A.C."/>
            <person name="Bartlett D."/>
            <person name="Higgins B.P."/>
            <person name="Richardson P."/>
        </authorList>
    </citation>
    <scope>NUCLEOTIDE SEQUENCE [LARGE SCALE GENOMIC DNA]</scope>
    <source>
        <strain>T6c / ATCC BAA-1087</strain>
    </source>
</reference>
<organism>
    <name type="scientific">Pseudoalteromonas atlantica (strain T6c / ATCC BAA-1087)</name>
    <dbReference type="NCBI Taxonomy" id="3042615"/>
    <lineage>
        <taxon>Bacteria</taxon>
        <taxon>Pseudomonadati</taxon>
        <taxon>Pseudomonadota</taxon>
        <taxon>Gammaproteobacteria</taxon>
        <taxon>Alteromonadales</taxon>
        <taxon>Alteromonadaceae</taxon>
        <taxon>Paraglaciecola</taxon>
    </lineage>
</organism>
<name>GLGB_PSEA6</name>
<dbReference type="EC" id="2.4.1.18" evidence="1"/>
<dbReference type="EMBL" id="CP000388">
    <property type="protein sequence ID" value="ABG40158.1"/>
    <property type="molecule type" value="Genomic_DNA"/>
</dbReference>
<dbReference type="RefSeq" id="WP_011574465.1">
    <property type="nucleotide sequence ID" value="NC_008228.1"/>
</dbReference>
<dbReference type="SMR" id="Q15VD0"/>
<dbReference type="STRING" id="342610.Patl_1636"/>
<dbReference type="CAZy" id="CBM48">
    <property type="family name" value="Carbohydrate-Binding Module Family 48"/>
</dbReference>
<dbReference type="CAZy" id="GH13">
    <property type="family name" value="Glycoside Hydrolase Family 13"/>
</dbReference>
<dbReference type="KEGG" id="pat:Patl_1636"/>
<dbReference type="eggNOG" id="COG0296">
    <property type="taxonomic scope" value="Bacteria"/>
</dbReference>
<dbReference type="HOGENOM" id="CLU_004245_3_2_6"/>
<dbReference type="OrthoDB" id="9800174at2"/>
<dbReference type="UniPathway" id="UPA00164"/>
<dbReference type="Proteomes" id="UP000001981">
    <property type="component" value="Chromosome"/>
</dbReference>
<dbReference type="GO" id="GO:0005829">
    <property type="term" value="C:cytosol"/>
    <property type="evidence" value="ECO:0007669"/>
    <property type="project" value="TreeGrafter"/>
</dbReference>
<dbReference type="GO" id="GO:0003844">
    <property type="term" value="F:1,4-alpha-glucan branching enzyme activity"/>
    <property type="evidence" value="ECO:0007669"/>
    <property type="project" value="UniProtKB-UniRule"/>
</dbReference>
<dbReference type="GO" id="GO:0043169">
    <property type="term" value="F:cation binding"/>
    <property type="evidence" value="ECO:0007669"/>
    <property type="project" value="InterPro"/>
</dbReference>
<dbReference type="GO" id="GO:0004553">
    <property type="term" value="F:hydrolase activity, hydrolyzing O-glycosyl compounds"/>
    <property type="evidence" value="ECO:0007669"/>
    <property type="project" value="InterPro"/>
</dbReference>
<dbReference type="GO" id="GO:0005978">
    <property type="term" value="P:glycogen biosynthetic process"/>
    <property type="evidence" value="ECO:0007669"/>
    <property type="project" value="UniProtKB-UniRule"/>
</dbReference>
<dbReference type="CDD" id="cd11322">
    <property type="entry name" value="AmyAc_Glg_BE"/>
    <property type="match status" value="1"/>
</dbReference>
<dbReference type="CDD" id="cd02855">
    <property type="entry name" value="E_set_GBE_prok_N"/>
    <property type="match status" value="1"/>
</dbReference>
<dbReference type="FunFam" id="2.60.40.1180:FF:000002">
    <property type="entry name" value="1,4-alpha-glucan branching enzyme GlgB"/>
    <property type="match status" value="1"/>
</dbReference>
<dbReference type="FunFam" id="3.20.20.80:FF:000003">
    <property type="entry name" value="1,4-alpha-glucan branching enzyme GlgB"/>
    <property type="match status" value="1"/>
</dbReference>
<dbReference type="Gene3D" id="3.20.20.80">
    <property type="entry name" value="Glycosidases"/>
    <property type="match status" value="1"/>
</dbReference>
<dbReference type="Gene3D" id="2.60.40.1180">
    <property type="entry name" value="Golgi alpha-mannosidase II"/>
    <property type="match status" value="1"/>
</dbReference>
<dbReference type="Gene3D" id="2.60.40.10">
    <property type="entry name" value="Immunoglobulins"/>
    <property type="match status" value="2"/>
</dbReference>
<dbReference type="HAMAP" id="MF_00685">
    <property type="entry name" value="GlgB"/>
    <property type="match status" value="1"/>
</dbReference>
<dbReference type="InterPro" id="IPR006048">
    <property type="entry name" value="A-amylase/branching_C"/>
</dbReference>
<dbReference type="InterPro" id="IPR037439">
    <property type="entry name" value="Branching_enzy"/>
</dbReference>
<dbReference type="InterPro" id="IPR006407">
    <property type="entry name" value="GlgB"/>
</dbReference>
<dbReference type="InterPro" id="IPR054169">
    <property type="entry name" value="GlgB_N"/>
</dbReference>
<dbReference type="InterPro" id="IPR044143">
    <property type="entry name" value="GlgB_N_E_set_prok"/>
</dbReference>
<dbReference type="InterPro" id="IPR006047">
    <property type="entry name" value="Glyco_hydro_13_cat_dom"/>
</dbReference>
<dbReference type="InterPro" id="IPR004193">
    <property type="entry name" value="Glyco_hydro_13_N"/>
</dbReference>
<dbReference type="InterPro" id="IPR013780">
    <property type="entry name" value="Glyco_hydro_b"/>
</dbReference>
<dbReference type="InterPro" id="IPR017853">
    <property type="entry name" value="Glycoside_hydrolase_SF"/>
</dbReference>
<dbReference type="InterPro" id="IPR013783">
    <property type="entry name" value="Ig-like_fold"/>
</dbReference>
<dbReference type="InterPro" id="IPR014756">
    <property type="entry name" value="Ig_E-set"/>
</dbReference>
<dbReference type="NCBIfam" id="TIGR01515">
    <property type="entry name" value="branching_enzym"/>
    <property type="match status" value="1"/>
</dbReference>
<dbReference type="NCBIfam" id="NF003811">
    <property type="entry name" value="PRK05402.1"/>
    <property type="match status" value="1"/>
</dbReference>
<dbReference type="NCBIfam" id="NF008967">
    <property type="entry name" value="PRK12313.1"/>
    <property type="match status" value="1"/>
</dbReference>
<dbReference type="PANTHER" id="PTHR43651">
    <property type="entry name" value="1,4-ALPHA-GLUCAN-BRANCHING ENZYME"/>
    <property type="match status" value="1"/>
</dbReference>
<dbReference type="PANTHER" id="PTHR43651:SF3">
    <property type="entry name" value="1,4-ALPHA-GLUCAN-BRANCHING ENZYME"/>
    <property type="match status" value="1"/>
</dbReference>
<dbReference type="Pfam" id="PF00128">
    <property type="entry name" value="Alpha-amylase"/>
    <property type="match status" value="2"/>
</dbReference>
<dbReference type="Pfam" id="PF02806">
    <property type="entry name" value="Alpha-amylase_C"/>
    <property type="match status" value="1"/>
</dbReference>
<dbReference type="Pfam" id="PF02922">
    <property type="entry name" value="CBM_48"/>
    <property type="match status" value="1"/>
</dbReference>
<dbReference type="Pfam" id="PF22019">
    <property type="entry name" value="GlgB_N"/>
    <property type="match status" value="1"/>
</dbReference>
<dbReference type="PIRSF" id="PIRSF000463">
    <property type="entry name" value="GlgB"/>
    <property type="match status" value="1"/>
</dbReference>
<dbReference type="SMART" id="SM00642">
    <property type="entry name" value="Aamy"/>
    <property type="match status" value="1"/>
</dbReference>
<dbReference type="SUPFAM" id="SSF51445">
    <property type="entry name" value="(Trans)glycosidases"/>
    <property type="match status" value="1"/>
</dbReference>
<dbReference type="SUPFAM" id="SSF81296">
    <property type="entry name" value="E set domains"/>
    <property type="match status" value="2"/>
</dbReference>
<dbReference type="SUPFAM" id="SSF51011">
    <property type="entry name" value="Glycosyl hydrolase domain"/>
    <property type="match status" value="1"/>
</dbReference>
<evidence type="ECO:0000255" key="1">
    <source>
        <dbReference type="HAMAP-Rule" id="MF_00685"/>
    </source>
</evidence>